<proteinExistence type="evidence at transcript level"/>
<accession>Q8K4D6</accession>
<protein>
    <recommendedName>
        <fullName evidence="7">Cytochrome P450 4X1</fullName>
        <ecNumber evidence="4">1.14.14.-</ecNumber>
    </recommendedName>
    <alternativeName>
        <fullName>CYPIVX1</fullName>
    </alternativeName>
</protein>
<keyword id="KW-0256">Endoplasmic reticulum</keyword>
<keyword id="KW-0349">Heme</keyword>
<keyword id="KW-0408">Iron</keyword>
<keyword id="KW-0443">Lipid metabolism</keyword>
<keyword id="KW-0472">Membrane</keyword>
<keyword id="KW-0479">Metal-binding</keyword>
<keyword id="KW-0492">Microsome</keyword>
<keyword id="KW-0503">Monooxygenase</keyword>
<keyword id="KW-0560">Oxidoreductase</keyword>
<keyword id="KW-1185">Reference proteome</keyword>
<keyword id="KW-0812">Transmembrane</keyword>
<keyword id="KW-1133">Transmembrane helix</keyword>
<gene>
    <name evidence="7 9" type="primary">Cyp4x1</name>
</gene>
<dbReference type="EC" id="1.14.14.-" evidence="4"/>
<dbReference type="EMBL" id="AF439343">
    <property type="protein sequence ID" value="AAM73782.1"/>
    <property type="molecule type" value="mRNA"/>
</dbReference>
<dbReference type="PIR" id="JC7883">
    <property type="entry name" value="JC7883"/>
</dbReference>
<dbReference type="RefSeq" id="NP_663708.1">
    <property type="nucleotide sequence ID" value="NM_145675.2"/>
</dbReference>
<dbReference type="SMR" id="Q8K4D6"/>
<dbReference type="FunCoup" id="Q8K4D6">
    <property type="interactions" value="114"/>
</dbReference>
<dbReference type="STRING" id="10116.ENSRNOP00000011985"/>
<dbReference type="PhosphoSitePlus" id="Q8K4D6"/>
<dbReference type="PaxDb" id="10116-ENSRNOP00000011985"/>
<dbReference type="Ensembl" id="ENSRNOT00000011985.3">
    <property type="protein sequence ID" value="ENSRNOP00000011985.1"/>
    <property type="gene ID" value="ENSRNOG00000043513.2"/>
</dbReference>
<dbReference type="GeneID" id="246767"/>
<dbReference type="KEGG" id="rno:246767"/>
<dbReference type="UCSC" id="RGD:628719">
    <property type="organism name" value="rat"/>
</dbReference>
<dbReference type="AGR" id="RGD:628719"/>
<dbReference type="CTD" id="260293"/>
<dbReference type="RGD" id="628719">
    <property type="gene designation" value="Cyp4x1"/>
</dbReference>
<dbReference type="eggNOG" id="KOG0157">
    <property type="taxonomic scope" value="Eukaryota"/>
</dbReference>
<dbReference type="GeneTree" id="ENSGT00940000160927"/>
<dbReference type="HOGENOM" id="CLU_001570_5_1_1"/>
<dbReference type="InParanoid" id="Q8K4D6"/>
<dbReference type="OMA" id="VLHQYTE"/>
<dbReference type="OrthoDB" id="1470350at2759"/>
<dbReference type="PhylomeDB" id="Q8K4D6"/>
<dbReference type="TreeFam" id="TF105088"/>
<dbReference type="PRO" id="PR:Q8K4D6"/>
<dbReference type="Proteomes" id="UP000002494">
    <property type="component" value="Chromosome 5"/>
</dbReference>
<dbReference type="Bgee" id="ENSRNOG00000043513">
    <property type="expression patterns" value="Expressed in frontal cortex and 5 other cell types or tissues"/>
</dbReference>
<dbReference type="GO" id="GO:0005789">
    <property type="term" value="C:endoplasmic reticulum membrane"/>
    <property type="evidence" value="ECO:0007669"/>
    <property type="project" value="UniProtKB-SubCell"/>
</dbReference>
<dbReference type="GO" id="GO:0062189">
    <property type="term" value="F:anandamide 14,15 epoxidase activity"/>
    <property type="evidence" value="ECO:0000250"/>
    <property type="project" value="UniProtKB"/>
</dbReference>
<dbReference type="GO" id="GO:0020037">
    <property type="term" value="F:heme binding"/>
    <property type="evidence" value="ECO:0007669"/>
    <property type="project" value="InterPro"/>
</dbReference>
<dbReference type="GO" id="GO:0005506">
    <property type="term" value="F:iron ion binding"/>
    <property type="evidence" value="ECO:0007669"/>
    <property type="project" value="InterPro"/>
</dbReference>
<dbReference type="GO" id="GO:0006629">
    <property type="term" value="P:lipid metabolic process"/>
    <property type="evidence" value="ECO:0007669"/>
    <property type="project" value="UniProtKB-KW"/>
</dbReference>
<dbReference type="CDD" id="cd20678">
    <property type="entry name" value="CYP4B-like"/>
    <property type="match status" value="1"/>
</dbReference>
<dbReference type="FunFam" id="1.10.630.10:FF:000005">
    <property type="entry name" value="cytochrome P450 4F22 isoform X2"/>
    <property type="match status" value="1"/>
</dbReference>
<dbReference type="Gene3D" id="1.10.630.10">
    <property type="entry name" value="Cytochrome P450"/>
    <property type="match status" value="1"/>
</dbReference>
<dbReference type="InterPro" id="IPR001128">
    <property type="entry name" value="Cyt_P450"/>
</dbReference>
<dbReference type="InterPro" id="IPR017972">
    <property type="entry name" value="Cyt_P450_CS"/>
</dbReference>
<dbReference type="InterPro" id="IPR002401">
    <property type="entry name" value="Cyt_P450_E_grp-I"/>
</dbReference>
<dbReference type="InterPro" id="IPR036396">
    <property type="entry name" value="Cyt_P450_sf"/>
</dbReference>
<dbReference type="InterPro" id="IPR050196">
    <property type="entry name" value="Cytochrome_P450_Monoox"/>
</dbReference>
<dbReference type="PANTHER" id="PTHR24291:SF63">
    <property type="entry name" value="CYTOCHROME P450 4X1-RELATED"/>
    <property type="match status" value="1"/>
</dbReference>
<dbReference type="PANTHER" id="PTHR24291">
    <property type="entry name" value="CYTOCHROME P450 FAMILY 4"/>
    <property type="match status" value="1"/>
</dbReference>
<dbReference type="Pfam" id="PF00067">
    <property type="entry name" value="p450"/>
    <property type="match status" value="1"/>
</dbReference>
<dbReference type="PRINTS" id="PR00463">
    <property type="entry name" value="EP450I"/>
</dbReference>
<dbReference type="PRINTS" id="PR00385">
    <property type="entry name" value="P450"/>
</dbReference>
<dbReference type="SUPFAM" id="SSF48264">
    <property type="entry name" value="Cytochrome P450"/>
    <property type="match status" value="1"/>
</dbReference>
<dbReference type="PROSITE" id="PS00086">
    <property type="entry name" value="CYTOCHROME_P450"/>
    <property type="match status" value="1"/>
</dbReference>
<evidence type="ECO:0000250" key="1"/>
<evidence type="ECO:0000250" key="2">
    <source>
        <dbReference type="UniProtKB" id="P51869"/>
    </source>
</evidence>
<evidence type="ECO:0000250" key="3">
    <source>
        <dbReference type="UniProtKB" id="Q6A152"/>
    </source>
</evidence>
<evidence type="ECO:0000250" key="4">
    <source>
        <dbReference type="UniProtKB" id="Q8N118"/>
    </source>
</evidence>
<evidence type="ECO:0000255" key="5"/>
<evidence type="ECO:0000269" key="6">
    <source>
    </source>
</evidence>
<evidence type="ECO:0000303" key="7">
    <source>
    </source>
</evidence>
<evidence type="ECO:0000305" key="8"/>
<evidence type="ECO:0000312" key="9">
    <source>
        <dbReference type="RGD" id="628719"/>
    </source>
</evidence>
<sequence length="507" mass="58574">MEASWLENRWARPLHLALVFCLALVLMQAVKLYLRRQRLLRDLRPFPGPTAHWLLGHQKFLQEDNMEKLDEIVKEYPCAFPCWVGPFQAFFYIYDPDYAKIFLSRTDPKTQYLHQLMTPFLGRGLLNLDGPRWFQHRCLLTPAFHQDILKPCVDMMAHSVNMMLDKWEKTWTTQETTIEVFEHINLMTLDIIMKCAFGQETNCQINGTYESYVKATFELGEIISSRLYNFWHHHDIIFKLSPKGHCFQELGKVIHQCTEKIIQDRKKTLKDQVNQDDTQTSQNFLDIVLSAQAGDEKAFSDADLRSEVNTFMWAGHDASAASISWLLYCLALNPEHQDRCRTEIRSILGDGSSITWEQLDEIPYTTMCIKETLRLIPPIPSISRELSKPLTLPDGHSLPAGMTVVLSIWGLHHNPAVWKDPKVFDPLRFTKENSEQRHPCAFLPFSSGPRNCIGQQFAMLELKVAIALTLLRFRVAADLTRPPAFSSHTVLRPKHGIYLHLKKLPEC</sequence>
<feature type="chain" id="PRO_0000051863" description="Cytochrome P450 4X1">
    <location>
        <begin position="1"/>
        <end position="507"/>
    </location>
</feature>
<feature type="transmembrane region" description="Helical" evidence="5">
    <location>
        <begin position="14"/>
        <end position="34"/>
    </location>
</feature>
<feature type="binding site" description="axial binding residue" evidence="1">
    <location>
        <position position="452"/>
    </location>
    <ligand>
        <name>heme</name>
        <dbReference type="ChEBI" id="CHEBI:30413"/>
    </ligand>
    <ligandPart>
        <name>Fe</name>
        <dbReference type="ChEBI" id="CHEBI:18248"/>
    </ligandPart>
</feature>
<organism>
    <name type="scientific">Rattus norvegicus</name>
    <name type="common">Rat</name>
    <dbReference type="NCBI Taxonomy" id="10116"/>
    <lineage>
        <taxon>Eukaryota</taxon>
        <taxon>Metazoa</taxon>
        <taxon>Chordata</taxon>
        <taxon>Craniata</taxon>
        <taxon>Vertebrata</taxon>
        <taxon>Euteleostomi</taxon>
        <taxon>Mammalia</taxon>
        <taxon>Eutheria</taxon>
        <taxon>Euarchontoglires</taxon>
        <taxon>Glires</taxon>
        <taxon>Rodentia</taxon>
        <taxon>Myomorpha</taxon>
        <taxon>Muroidea</taxon>
        <taxon>Muridae</taxon>
        <taxon>Murinae</taxon>
        <taxon>Rattus</taxon>
    </lineage>
</organism>
<comment type="function">
    <text evidence="4">A cytochrome P450 monooxygenase that selectively catalyzes the epoxidation of the last double bond of the arachidonoyl moiety of anandamide, potentially modulating endocannabinoid signaling. Has no hydroxylase activity toward various fatty acids, steroids and prostaglandins. Mechanistically, uses molecular oxygen inserting one oxygen atom into a substrate, and reducing the second into a water molecule, with two electrons provided by NADPH via cytochrome P450 reductase (CPR; NADPH-ferrihemoprotein reductase).</text>
</comment>
<comment type="catalytic activity">
    <reaction evidence="4">
        <text>N-(5Z,8Z,11Z,14Z-eicosatetraenoyl)-ethanolamine + reduced [NADPH--hemoprotein reductase] + O2 = N-(14,15-epoxy-5Z,8Z,11Z-eicosatrienoyl)-ethanolamine + oxidized [NADPH--hemoprotein reductase] + H2O + H(+)</text>
        <dbReference type="Rhea" id="RHEA:53148"/>
        <dbReference type="Rhea" id="RHEA-COMP:11964"/>
        <dbReference type="Rhea" id="RHEA-COMP:11965"/>
        <dbReference type="ChEBI" id="CHEBI:2700"/>
        <dbReference type="ChEBI" id="CHEBI:15377"/>
        <dbReference type="ChEBI" id="CHEBI:15378"/>
        <dbReference type="ChEBI" id="CHEBI:15379"/>
        <dbReference type="ChEBI" id="CHEBI:57618"/>
        <dbReference type="ChEBI" id="CHEBI:58210"/>
        <dbReference type="ChEBI" id="CHEBI:136991"/>
    </reaction>
    <physiologicalReaction direction="left-to-right" evidence="4">
        <dbReference type="Rhea" id="RHEA:53149"/>
    </physiologicalReaction>
</comment>
<comment type="cofactor">
    <cofactor evidence="2">
        <name>heme</name>
        <dbReference type="ChEBI" id="CHEBI:30413"/>
    </cofactor>
</comment>
<comment type="subcellular location">
    <subcellularLocation>
        <location evidence="3">Endoplasmic reticulum membrane</location>
        <topology evidence="5">Single-pass membrane protein</topology>
    </subcellularLocation>
    <subcellularLocation>
        <location evidence="3">Microsome membrane</location>
        <topology evidence="5">Single-pass membrane protein</topology>
    </subcellularLocation>
</comment>
<comment type="tissue specificity">
    <text evidence="6">Expressed at high levels in brain, mainly in neurons in different regions, including brain stem, hippocampus, cortex and cerebellum. Also expressed in cerebral vasculature. Not detected in kidney, nor liver.</text>
</comment>
<comment type="similarity">
    <text evidence="8">Belongs to the cytochrome P450 family.</text>
</comment>
<name>CP4X1_RAT</name>
<reference key="1">
    <citation type="journal article" date="2002" name="Biochem. Biophys. Res. Commun.">
        <title>Identification of a novel cytochrome P450, CYP4X1, with unique localization specific to the brain.</title>
        <authorList>
            <person name="Bylund J."/>
            <person name="Zhang C."/>
            <person name="Harder D.R."/>
        </authorList>
    </citation>
    <scope>NUCLEOTIDE SEQUENCE [MRNA]</scope>
    <scope>TISSUE SPECIFICITY</scope>
    <source>
        <strain>Sprague-Dawley</strain>
        <tissue>Brain</tissue>
    </source>
</reference>